<protein>
    <recommendedName>
        <fullName evidence="4">Diels-Alderase ORF3</fullName>
        <ecNumber evidence="7">5.5.1.-</ecNumber>
    </recommendedName>
    <alternativeName>
        <fullName evidence="5">ACE1 cytochalasan biosynthesis cluster protein ORF3</fullName>
    </alternativeName>
</protein>
<sequence>MLAQEVQQVLAAGTDDASACQISNMTAYEMEKGRKIVGLTKGATESFVVPRLSPLNSTGGEQWAFDGVSEDGVKSFMFGFYRDPNYSILGAGNFRLSLEFGFANRERVAELYYAERTVIETCPQGVRGVWYSESEGWHHSFLIKADMSEAVITLNSDSLKGTITYKSKSLPIAADGHVWPNGNATTEPVRYLHWSEPIPAGTVEFDVEIKGKKATWKGIGGHERFWTAFSWFTCLTNLQGLRAMAGPYVLSFFRFESGLDEGHVHQSAVLFKDGVQIFRSTLGAESDTEDYVLAQKTYGGAVTGDLKDKVTGFQVELVSPSKKQHYTFFIEHKNLAFEYLLGEGVGGSGFSAIAKGGHVGQLQYEGPSLTEALTFPKNSPLFKSNYV</sequence>
<name>ORF3B_PYRO7</name>
<proteinExistence type="evidence at transcript level"/>
<keyword id="KW-0413">Isomerase</keyword>
<keyword id="KW-1185">Reference proteome</keyword>
<dbReference type="EC" id="5.5.1.-" evidence="7"/>
<dbReference type="EMBL" id="CM001232">
    <property type="protein sequence ID" value="EHA55870.1"/>
    <property type="molecule type" value="Genomic_DNA"/>
</dbReference>
<dbReference type="RefSeq" id="XP_003715677.1">
    <property type="nucleotide sequence ID" value="XM_003715629.1"/>
</dbReference>
<dbReference type="SMR" id="G4MWB0"/>
<dbReference type="STRING" id="242507.G4MWB0"/>
<dbReference type="EnsemblFungi" id="MGG_08381T0">
    <property type="protein sequence ID" value="MGG_08381T0"/>
    <property type="gene ID" value="MGG_08381"/>
</dbReference>
<dbReference type="GeneID" id="2678526"/>
<dbReference type="KEGG" id="mgr:MGG_08381"/>
<dbReference type="VEuPathDB" id="FungiDB:MGG_08381"/>
<dbReference type="eggNOG" id="ENOG502SJYF">
    <property type="taxonomic scope" value="Eukaryota"/>
</dbReference>
<dbReference type="HOGENOM" id="CLU_041924_1_0_1"/>
<dbReference type="InParanoid" id="G4MWB0"/>
<dbReference type="OMA" id="GGHERFW"/>
<dbReference type="OrthoDB" id="5344254at2759"/>
<dbReference type="Proteomes" id="UP000009058">
    <property type="component" value="Chromosome 2"/>
</dbReference>
<dbReference type="GO" id="GO:0016853">
    <property type="term" value="F:isomerase activity"/>
    <property type="evidence" value="ECO:0007669"/>
    <property type="project" value="UniProtKB-KW"/>
</dbReference>
<dbReference type="InterPro" id="IPR054499">
    <property type="entry name" value="DA_C"/>
</dbReference>
<dbReference type="Pfam" id="PF22903">
    <property type="entry name" value="DA_C"/>
    <property type="match status" value="1"/>
</dbReference>
<dbReference type="Pfam" id="PF24137">
    <property type="entry name" value="DA_N"/>
    <property type="match status" value="1"/>
</dbReference>
<dbReference type="SUPFAM" id="SSF159245">
    <property type="entry name" value="AttH-like"/>
    <property type="match status" value="1"/>
</dbReference>
<gene>
    <name evidence="4" type="primary">ORF3</name>
    <name type="ORF">MGG_08381</name>
</gene>
<evidence type="ECO:0000269" key="1">
    <source>
    </source>
</evidence>
<evidence type="ECO:0000269" key="2">
    <source>
    </source>
</evidence>
<evidence type="ECO:0000269" key="3">
    <source>
    </source>
</evidence>
<evidence type="ECO:0000303" key="4">
    <source>
    </source>
</evidence>
<evidence type="ECO:0000303" key="5">
    <source>
    </source>
</evidence>
<evidence type="ECO:0000305" key="6"/>
<evidence type="ECO:0000305" key="7">
    <source>
    </source>
</evidence>
<evidence type="ECO:0000305" key="8">
    <source>
    </source>
</evidence>
<comment type="function">
    <text evidence="1 2 3 7 8">Diels-Alderase; part of the gene cluster that mediates the biosynthesis of a tyrosine-derived cytochalasan acting as a fungal signal recognized by resistant rice plants and leads to avirulence in Pi33 resistant rice cultivars (PubMed:18433432). The first step in the pathway is catalyzed by the hybrid PKS-NRPS ACE1, assisted by the enoyl reductase RAP1, that are responsible for fusion of the tyrosine precursor and the polyketide backbone (PubMed:29142718). The polyketide synthase module (PKS) of ACE1 is responsible for the synthesis of the polyketide backbone and the downstream nonribosomal peptide synthetase (NRPS) amidates the carboxyl end of the polyketide with the tyrosine precursor (PubMed:29142718). Because ACE1 lacks a designated enoylreductase (ER) domain, the required activity is provided the enoyl reductase RAP1 (PubMed:29142718). Reduction by the hydrolyase ORFZ, followed by dehydration and intra-molecular Diels-Alder cyclization by the Diels-Alderase ORF3 then yield the required isoindolone-fused macrocycle (Probable). A number of oxidative steps catalyzed by the tailoring enzymes identified within the cluster, including cytochrome P450 monooxygenases CYP1 to CYP4, the FAD-linked oxidoreductase OXR2 and the short-chain dehydrogenase/reductase OXR1, are further required to afford the final cytochalasans that confer avirulence and which have still to be identified (Probable). The monooxygenase CYP1 has been shown to be a site-selective C-18 hydroxylase whereas the function of CYP3 is the site-selective epoxidation of the C-6/C-7 olefin that is present in some intermediate compounds (PubMed:31644300). Finally, SYN2 and RAP2 are not required for avirulence in Pi33 resistant rice cultivars (PubMed:18433432).</text>
</comment>
<comment type="pathway">
    <text evidence="7">Secondary metabolite biosynthesis.</text>
</comment>
<comment type="induction">
    <text evidence="1">Expressed exclusively during fungal penetration of host leaves, the time point at which plant defense reactions are triggered.</text>
</comment>
<comment type="similarity">
    <text evidence="6">Belongs to the Diels-Alderase family.</text>
</comment>
<reference key="1">
    <citation type="journal article" date="2005" name="Nature">
        <title>The genome sequence of the rice blast fungus Magnaporthe grisea.</title>
        <authorList>
            <person name="Dean R.A."/>
            <person name="Talbot N.J."/>
            <person name="Ebbole D.J."/>
            <person name="Farman M.L."/>
            <person name="Mitchell T.K."/>
            <person name="Orbach M.J."/>
            <person name="Thon M.R."/>
            <person name="Kulkarni R."/>
            <person name="Xu J.-R."/>
            <person name="Pan H."/>
            <person name="Read N.D."/>
            <person name="Lee Y.-H."/>
            <person name="Carbone I."/>
            <person name="Brown D."/>
            <person name="Oh Y.Y."/>
            <person name="Donofrio N."/>
            <person name="Jeong J.S."/>
            <person name="Soanes D.M."/>
            <person name="Djonovic S."/>
            <person name="Kolomiets E."/>
            <person name="Rehmeyer C."/>
            <person name="Li W."/>
            <person name="Harding M."/>
            <person name="Kim S."/>
            <person name="Lebrun M.-H."/>
            <person name="Bohnert H."/>
            <person name="Coughlan S."/>
            <person name="Butler J."/>
            <person name="Calvo S.E."/>
            <person name="Ma L.-J."/>
            <person name="Nicol R."/>
            <person name="Purcell S."/>
            <person name="Nusbaum C."/>
            <person name="Galagan J.E."/>
            <person name="Birren B.W."/>
        </authorList>
    </citation>
    <scope>NUCLEOTIDE SEQUENCE [LARGE SCALE GENOMIC DNA]</scope>
    <source>
        <strain>70-15 / ATCC MYA-4617 / FGSC 8958</strain>
    </source>
</reference>
<reference key="2">
    <citation type="journal article" date="2008" name="New Phytol.">
        <title>Magnaporthe grisea avirulence gene ACE1 belongs to an infection-specific gene cluster involved in secondary metabolism.</title>
        <authorList>
            <person name="Collemare J."/>
            <person name="Pianfetti M."/>
            <person name="Houlle A.E."/>
            <person name="Morin D."/>
            <person name="Camborde L."/>
            <person name="Gagey M.J."/>
            <person name="Barbisan C."/>
            <person name="Fudal I."/>
            <person name="Lebrun M.H."/>
            <person name="Boehnert H.U."/>
        </authorList>
    </citation>
    <scope>FUNCTION</scope>
    <scope>INDUCTION</scope>
    <scope>PATHWAY</scope>
</reference>
<reference key="3">
    <citation type="journal article" date="2015" name="Chem. Sci.">
        <title>Heterologous expression of the avirulence gene ACE1 from the fungal rice pathogen Magnaporthe oryzae.</title>
        <authorList>
            <person name="Song Z."/>
            <person name="Bakeer W."/>
            <person name="Marshall J.W."/>
            <person name="Yakasai A.A."/>
            <person name="Khalid R.M."/>
            <person name="Collemare J."/>
            <person name="Skellam E."/>
            <person name="Tharreau D."/>
            <person name="Lebrun M.H."/>
            <person name="Lazarus C.M."/>
            <person name="Bailey A.M."/>
            <person name="Simpson T.J."/>
            <person name="Cox R.J."/>
        </authorList>
    </citation>
    <scope>FUNCTION</scope>
</reference>
<reference key="4">
    <citation type="journal article" date="2019" name="Org. Lett.">
        <title>Investigating the function of cryptic cytochalasan cytochrome P450 monooxygenases using combinatorial biosynthesis.</title>
        <authorList>
            <person name="Wang C."/>
            <person name="Becker K."/>
            <person name="Pfuetze S."/>
            <person name="Kuhnert E."/>
            <person name="Stadler M."/>
            <person name="Cox R.J."/>
            <person name="Skellam E."/>
        </authorList>
    </citation>
    <scope>FUNCTION</scope>
</reference>
<accession>G4MWB0</accession>
<feature type="chain" id="PRO_0000449455" description="Diels-Alderase ORF3">
    <location>
        <begin position="1"/>
        <end position="387"/>
    </location>
</feature>
<organism>
    <name type="scientific">Pyricularia oryzae (strain 70-15 / ATCC MYA-4617 / FGSC 8958)</name>
    <name type="common">Rice blast fungus</name>
    <name type="synonym">Magnaporthe oryzae</name>
    <dbReference type="NCBI Taxonomy" id="242507"/>
    <lineage>
        <taxon>Eukaryota</taxon>
        <taxon>Fungi</taxon>
        <taxon>Dikarya</taxon>
        <taxon>Ascomycota</taxon>
        <taxon>Pezizomycotina</taxon>
        <taxon>Sordariomycetes</taxon>
        <taxon>Sordariomycetidae</taxon>
        <taxon>Magnaporthales</taxon>
        <taxon>Pyriculariaceae</taxon>
        <taxon>Pyricularia</taxon>
    </lineage>
</organism>